<accession>Q0HX56</accession>
<protein>
    <recommendedName>
        <fullName evidence="1">Histidine--tRNA ligase</fullName>
        <ecNumber evidence="1">6.1.1.21</ecNumber>
    </recommendedName>
    <alternativeName>
        <fullName evidence="1">Histidyl-tRNA synthetase</fullName>
        <shortName evidence="1">HisRS</shortName>
    </alternativeName>
</protein>
<comment type="catalytic activity">
    <reaction evidence="1">
        <text>tRNA(His) + L-histidine + ATP = L-histidyl-tRNA(His) + AMP + diphosphate + H(+)</text>
        <dbReference type="Rhea" id="RHEA:17313"/>
        <dbReference type="Rhea" id="RHEA-COMP:9665"/>
        <dbReference type="Rhea" id="RHEA-COMP:9689"/>
        <dbReference type="ChEBI" id="CHEBI:15378"/>
        <dbReference type="ChEBI" id="CHEBI:30616"/>
        <dbReference type="ChEBI" id="CHEBI:33019"/>
        <dbReference type="ChEBI" id="CHEBI:57595"/>
        <dbReference type="ChEBI" id="CHEBI:78442"/>
        <dbReference type="ChEBI" id="CHEBI:78527"/>
        <dbReference type="ChEBI" id="CHEBI:456215"/>
        <dbReference type="EC" id="6.1.1.21"/>
    </reaction>
</comment>
<comment type="subunit">
    <text evidence="1">Homodimer.</text>
</comment>
<comment type="subcellular location">
    <subcellularLocation>
        <location evidence="1">Cytoplasm</location>
    </subcellularLocation>
</comment>
<comment type="similarity">
    <text evidence="1">Belongs to the class-II aminoacyl-tRNA synthetase family.</text>
</comment>
<reference key="1">
    <citation type="submission" date="2006-08" db="EMBL/GenBank/DDBJ databases">
        <title>Complete sequence of chromosome 1 of Shewanella sp. MR-7.</title>
        <authorList>
            <person name="Copeland A."/>
            <person name="Lucas S."/>
            <person name="Lapidus A."/>
            <person name="Barry K."/>
            <person name="Detter J.C."/>
            <person name="Glavina del Rio T."/>
            <person name="Hammon N."/>
            <person name="Israni S."/>
            <person name="Dalin E."/>
            <person name="Tice H."/>
            <person name="Pitluck S."/>
            <person name="Kiss H."/>
            <person name="Brettin T."/>
            <person name="Bruce D."/>
            <person name="Han C."/>
            <person name="Tapia R."/>
            <person name="Gilna P."/>
            <person name="Schmutz J."/>
            <person name="Larimer F."/>
            <person name="Land M."/>
            <person name="Hauser L."/>
            <person name="Kyrpides N."/>
            <person name="Mikhailova N."/>
            <person name="Nealson K."/>
            <person name="Konstantinidis K."/>
            <person name="Klappenbach J."/>
            <person name="Tiedje J."/>
            <person name="Richardson P."/>
        </authorList>
    </citation>
    <scope>NUCLEOTIDE SEQUENCE [LARGE SCALE GENOMIC DNA]</scope>
    <source>
        <strain>MR-7</strain>
    </source>
</reference>
<name>SYH_SHESR</name>
<organism>
    <name type="scientific">Shewanella sp. (strain MR-7)</name>
    <dbReference type="NCBI Taxonomy" id="60481"/>
    <lineage>
        <taxon>Bacteria</taxon>
        <taxon>Pseudomonadati</taxon>
        <taxon>Pseudomonadota</taxon>
        <taxon>Gammaproteobacteria</taxon>
        <taxon>Alteromonadales</taxon>
        <taxon>Shewanellaceae</taxon>
        <taxon>Shewanella</taxon>
    </lineage>
</organism>
<gene>
    <name evidence="1" type="primary">hisS</name>
    <name type="ordered locus">Shewmr7_1300</name>
</gene>
<feature type="chain" id="PRO_1000016451" description="Histidine--tRNA ligase">
    <location>
        <begin position="1"/>
        <end position="425"/>
    </location>
</feature>
<evidence type="ECO:0000255" key="1">
    <source>
        <dbReference type="HAMAP-Rule" id="MF_00127"/>
    </source>
</evidence>
<proteinExistence type="inferred from homology"/>
<keyword id="KW-0030">Aminoacyl-tRNA synthetase</keyword>
<keyword id="KW-0067">ATP-binding</keyword>
<keyword id="KW-0963">Cytoplasm</keyword>
<keyword id="KW-0436">Ligase</keyword>
<keyword id="KW-0547">Nucleotide-binding</keyword>
<keyword id="KW-0648">Protein biosynthesis</keyword>
<sequence length="425" mass="47480">MAKQIQAIRGMNDILPTQSPLWQKVEAVLRASVAAYGYSEIRTPIVENTDLFKRSIGEVTDIVEKEMYTFEDRNGDSLTLRPEGTASTVRAGNEHGLLYNQEQRLWYMGPMFRHERPQKGRYRQFHQFGVEVYGIGSADIDAEVLMLSARLWEKLGISEHVTLELNTLGDPAERAAYREALIAFLEQHKDKLDEDSQRRMYSNPLRVLDSKDPQVQSILGDAPALMDYLGQESSQHFAQLRELLDAVGIQYRVNPRLVRGLDYYNRTVFEWVTNSLGSQGTVLAGGRYDGLVAQLGGKDTPAVGFAMGLERIVLLLETLELTQDIPAAVDVYVAAMGDSCLVEAIKVAQELRSTLPTLRVMSHCGGGNFKKQIKRADKSGAQVALLIGEEELAEGVVTVKYLRNDNEQQRVARNALSAFLAELTK</sequence>
<dbReference type="EC" id="6.1.1.21" evidence="1"/>
<dbReference type="EMBL" id="CP000444">
    <property type="protein sequence ID" value="ABI42299.1"/>
    <property type="molecule type" value="Genomic_DNA"/>
</dbReference>
<dbReference type="SMR" id="Q0HX56"/>
<dbReference type="KEGG" id="shm:Shewmr7_1300"/>
<dbReference type="HOGENOM" id="CLU_025113_1_1_6"/>
<dbReference type="GO" id="GO:0005737">
    <property type="term" value="C:cytoplasm"/>
    <property type="evidence" value="ECO:0007669"/>
    <property type="project" value="UniProtKB-SubCell"/>
</dbReference>
<dbReference type="GO" id="GO:0005524">
    <property type="term" value="F:ATP binding"/>
    <property type="evidence" value="ECO:0007669"/>
    <property type="project" value="UniProtKB-UniRule"/>
</dbReference>
<dbReference type="GO" id="GO:0004821">
    <property type="term" value="F:histidine-tRNA ligase activity"/>
    <property type="evidence" value="ECO:0007669"/>
    <property type="project" value="UniProtKB-UniRule"/>
</dbReference>
<dbReference type="GO" id="GO:0006427">
    <property type="term" value="P:histidyl-tRNA aminoacylation"/>
    <property type="evidence" value="ECO:0007669"/>
    <property type="project" value="UniProtKB-UniRule"/>
</dbReference>
<dbReference type="CDD" id="cd00773">
    <property type="entry name" value="HisRS-like_core"/>
    <property type="match status" value="1"/>
</dbReference>
<dbReference type="CDD" id="cd00859">
    <property type="entry name" value="HisRS_anticodon"/>
    <property type="match status" value="1"/>
</dbReference>
<dbReference type="FunFam" id="3.30.930.10:FF:000005">
    <property type="entry name" value="Histidine--tRNA ligase"/>
    <property type="match status" value="1"/>
</dbReference>
<dbReference type="Gene3D" id="3.40.50.800">
    <property type="entry name" value="Anticodon-binding domain"/>
    <property type="match status" value="1"/>
</dbReference>
<dbReference type="Gene3D" id="3.30.930.10">
    <property type="entry name" value="Bira Bifunctional Protein, Domain 2"/>
    <property type="match status" value="1"/>
</dbReference>
<dbReference type="HAMAP" id="MF_00127">
    <property type="entry name" value="His_tRNA_synth"/>
    <property type="match status" value="1"/>
</dbReference>
<dbReference type="InterPro" id="IPR006195">
    <property type="entry name" value="aa-tRNA-synth_II"/>
</dbReference>
<dbReference type="InterPro" id="IPR045864">
    <property type="entry name" value="aa-tRNA-synth_II/BPL/LPL"/>
</dbReference>
<dbReference type="InterPro" id="IPR004154">
    <property type="entry name" value="Anticodon-bd"/>
</dbReference>
<dbReference type="InterPro" id="IPR036621">
    <property type="entry name" value="Anticodon-bd_dom_sf"/>
</dbReference>
<dbReference type="InterPro" id="IPR015807">
    <property type="entry name" value="His-tRNA-ligase"/>
</dbReference>
<dbReference type="InterPro" id="IPR041715">
    <property type="entry name" value="HisRS-like_core"/>
</dbReference>
<dbReference type="InterPro" id="IPR004516">
    <property type="entry name" value="HisRS/HisZ"/>
</dbReference>
<dbReference type="InterPro" id="IPR033656">
    <property type="entry name" value="HisRS_anticodon"/>
</dbReference>
<dbReference type="NCBIfam" id="TIGR00442">
    <property type="entry name" value="hisS"/>
    <property type="match status" value="1"/>
</dbReference>
<dbReference type="PANTHER" id="PTHR43707:SF1">
    <property type="entry name" value="HISTIDINE--TRNA LIGASE, MITOCHONDRIAL-RELATED"/>
    <property type="match status" value="1"/>
</dbReference>
<dbReference type="PANTHER" id="PTHR43707">
    <property type="entry name" value="HISTIDYL-TRNA SYNTHETASE"/>
    <property type="match status" value="1"/>
</dbReference>
<dbReference type="Pfam" id="PF03129">
    <property type="entry name" value="HGTP_anticodon"/>
    <property type="match status" value="1"/>
</dbReference>
<dbReference type="Pfam" id="PF13393">
    <property type="entry name" value="tRNA-synt_His"/>
    <property type="match status" value="1"/>
</dbReference>
<dbReference type="PIRSF" id="PIRSF001549">
    <property type="entry name" value="His-tRNA_synth"/>
    <property type="match status" value="1"/>
</dbReference>
<dbReference type="SUPFAM" id="SSF52954">
    <property type="entry name" value="Class II aaRS ABD-related"/>
    <property type="match status" value="1"/>
</dbReference>
<dbReference type="SUPFAM" id="SSF55681">
    <property type="entry name" value="Class II aaRS and biotin synthetases"/>
    <property type="match status" value="1"/>
</dbReference>
<dbReference type="PROSITE" id="PS50862">
    <property type="entry name" value="AA_TRNA_LIGASE_II"/>
    <property type="match status" value="1"/>
</dbReference>